<name>ACPY1_BPGO3</name>
<sequence length="259" mass="29285">MLDTTKLTMVGTGSAFSKKFYNNSALVTFTNGYNLLIDCGHSVPKGLHDLGFPLESLDGILITHTHADHIGGLEEVALYNKFVLGGRKIDLLVPEPLVEPLWNDSLNGGLRYDDSRELELDDYFTVRSLKTSDCGAARTQIDENIAFTLYTTLHVSHMKSYAVGLIDRGEEKVFYSSDTVFDEYLLDYALTMFPWVFHDCQLFTGGVHASLDELLGYTRYIPEKQQNKIFLMHYGDNVEEFIGKTGRMRFAEQGREIIL</sequence>
<reference key="1">
    <citation type="journal article" date="2017" name="Viruses">
        <title>Characterization of Bacillus subtilis Viruses vB_BsuM-Goe2 and vB_BsuM-Goe3.</title>
        <authorList>
            <person name="Willms I.M."/>
            <person name="Hoppert M."/>
            <person name="Hertel R."/>
        </authorList>
    </citation>
    <scope>NUCLEOTIDE SEQUENCE [LARGE SCALE GENOMIC DNA]</scope>
</reference>
<reference key="2">
    <citation type="journal article" date="2022" name="Nature">
        <title>Phage anti-CBASS and anti-Pycsar nucleases subvert bacterial immunity.</title>
        <authorList>
            <person name="Hobbs S.J."/>
            <person name="Wein T."/>
            <person name="Lu A."/>
            <person name="Morehouse B.R."/>
            <person name="Schnabel J."/>
            <person name="Leavitt A."/>
            <person name="Yirmiya E."/>
            <person name="Sorek R."/>
            <person name="Kranzusch P.J."/>
        </authorList>
    </citation>
    <scope>FUNCTION</scope>
    <scope>CATALYTIC ACTIVITY</scope>
</reference>
<proteinExistence type="evidence at protein level"/>
<organismHost>
    <name type="scientific">Bacillus subtilis</name>
    <dbReference type="NCBI Taxonomy" id="1423"/>
</organismHost>
<feature type="chain" id="PRO_0000456669" description="Anti-Pycsar protein Apyc1">
    <location>
        <begin position="1"/>
        <end position="259"/>
    </location>
</feature>
<feature type="region of interest" description="Beta-lactamase-like" evidence="2">
    <location>
        <begin position="21"/>
        <end position="233"/>
    </location>
</feature>
<feature type="binding site" evidence="2">
    <location>
        <position position="64"/>
    </location>
    <ligand>
        <name>Zn(2+)</name>
        <dbReference type="ChEBI" id="CHEBI:29105"/>
        <label>2</label>
    </ligand>
</feature>
<feature type="binding site" evidence="1">
    <location>
        <position position="66"/>
    </location>
    <ligand>
        <name>Zn(2+)</name>
        <dbReference type="ChEBI" id="CHEBI:29105"/>
        <label>2</label>
    </ligand>
</feature>
<feature type="binding site" evidence="3">
    <location>
        <position position="68"/>
    </location>
    <ligand>
        <name>Zn(2+)</name>
        <dbReference type="ChEBI" id="CHEBI:29105"/>
        <label>1</label>
    </ligand>
</feature>
<feature type="binding site" evidence="3">
    <location>
        <position position="69"/>
    </location>
    <ligand>
        <name>Zn(2+)</name>
        <dbReference type="ChEBI" id="CHEBI:29105"/>
        <label>1</label>
    </ligand>
</feature>
<feature type="binding site" evidence="2">
    <location>
        <position position="154"/>
    </location>
    <ligand>
        <name>Zn(2+)</name>
        <dbReference type="ChEBI" id="CHEBI:29105"/>
        <label>2</label>
    </ligand>
</feature>
<feature type="binding site" evidence="3">
    <location>
        <position position="178"/>
    </location>
    <ligand>
        <name>Zn(2+)</name>
        <dbReference type="ChEBI" id="CHEBI:29105"/>
        <label>1</label>
    </ligand>
</feature>
<feature type="binding site" evidence="3">
    <location>
        <position position="233"/>
    </location>
    <ligand>
        <name>Zn(2+)</name>
        <dbReference type="ChEBI" id="CHEBI:29105"/>
        <label>1</label>
    </ligand>
</feature>
<accession>A0A217ER65</accession>
<keyword id="KW-0945">Host-virus interaction</keyword>
<keyword id="KW-0378">Hydrolase</keyword>
<keyword id="KW-1090">Inhibition of host innate immune response by virus</keyword>
<keyword id="KW-0479">Metal-binding</keyword>
<keyword id="KW-1185">Reference proteome</keyword>
<keyword id="KW-0899">Viral immunoevasion</keyword>
<keyword id="KW-0862">Zinc</keyword>
<comment type="function">
    <text evidence="4">Counteracts the host Pycsar antiviral defense system. Phosphodiesterase that enables metal-dependent hydrolysis of host cyclic nucleotide Pycsar defense signals such as cCMP and cUMP.</text>
</comment>
<comment type="catalytic activity">
    <reaction evidence="4">
        <text>3',5'-cyclic CMP + H2O = CMP + H(+)</text>
        <dbReference type="Rhea" id="RHEA:72675"/>
        <dbReference type="ChEBI" id="CHEBI:15377"/>
        <dbReference type="ChEBI" id="CHEBI:15378"/>
        <dbReference type="ChEBI" id="CHEBI:58003"/>
        <dbReference type="ChEBI" id="CHEBI:60377"/>
    </reaction>
    <physiologicalReaction direction="left-to-right" evidence="4">
        <dbReference type="Rhea" id="RHEA:72676"/>
    </physiologicalReaction>
</comment>
<comment type="catalytic activity">
    <reaction evidence="4">
        <text>3',5'-cyclic UMP + H2O = UMP + H(+)</text>
        <dbReference type="Rhea" id="RHEA:70575"/>
        <dbReference type="ChEBI" id="CHEBI:15377"/>
        <dbReference type="ChEBI" id="CHEBI:15378"/>
        <dbReference type="ChEBI" id="CHEBI:57865"/>
        <dbReference type="ChEBI" id="CHEBI:184387"/>
    </reaction>
    <physiologicalReaction direction="left-to-right" evidence="4">
        <dbReference type="Rhea" id="RHEA:70576"/>
    </physiologicalReaction>
</comment>
<comment type="cofactor">
    <cofactor evidence="2">
        <name>Zn(2+)</name>
        <dbReference type="ChEBI" id="CHEBI:29105"/>
    </cofactor>
    <text evidence="2">Coordinates 2 Zn(2+) ions. One protomer coordinates the metal ions and the opposing protomer provides the catalytic residues required for cCMP hydrolysis.</text>
</comment>
<comment type="subunit">
    <text evidence="3">Homodimer.</text>
</comment>
<comment type="similarity">
    <text evidence="6">Belongs to the anti-Pycsar protein Apyc1 family.</text>
</comment>
<protein>
    <recommendedName>
        <fullName evidence="5">Anti-Pycsar protein Apyc1</fullName>
        <shortName evidence="5">Apyc1</shortName>
    </recommendedName>
</protein>
<dbReference type="EMBL" id="KY368640">
    <property type="protein sequence ID" value="APZ82580.1"/>
    <property type="molecule type" value="Genomic_DNA"/>
</dbReference>
<dbReference type="SMR" id="A0A217ER65"/>
<dbReference type="Proteomes" id="UP000221795">
    <property type="component" value="Genome"/>
</dbReference>
<dbReference type="GO" id="GO:0042781">
    <property type="term" value="F:3'-tRNA processing endoribonuclease activity"/>
    <property type="evidence" value="ECO:0007669"/>
    <property type="project" value="TreeGrafter"/>
</dbReference>
<dbReference type="GO" id="GO:0046872">
    <property type="term" value="F:metal ion binding"/>
    <property type="evidence" value="ECO:0007669"/>
    <property type="project" value="UniProtKB-KW"/>
</dbReference>
<dbReference type="GO" id="GO:0052170">
    <property type="term" value="P:symbiont-mediated suppression of host innate immune response"/>
    <property type="evidence" value="ECO:0007669"/>
    <property type="project" value="UniProtKB-KW"/>
</dbReference>
<dbReference type="Gene3D" id="3.60.15.10">
    <property type="entry name" value="Ribonuclease Z/Hydroxyacylglutathione hydrolase-like"/>
    <property type="match status" value="1"/>
</dbReference>
<dbReference type="InterPro" id="IPR056308">
    <property type="entry name" value="Anti-Pycsar_Apyc1"/>
</dbReference>
<dbReference type="InterPro" id="IPR001279">
    <property type="entry name" value="Metallo-B-lactamas"/>
</dbReference>
<dbReference type="InterPro" id="IPR036866">
    <property type="entry name" value="RibonucZ/Hydroxyglut_hydro"/>
</dbReference>
<dbReference type="PANTHER" id="PTHR46018">
    <property type="entry name" value="ZINC PHOSPHODIESTERASE ELAC PROTEIN 1"/>
    <property type="match status" value="1"/>
</dbReference>
<dbReference type="PANTHER" id="PTHR46018:SF2">
    <property type="entry name" value="ZINC PHOSPHODIESTERASE ELAC PROTEIN 1"/>
    <property type="match status" value="1"/>
</dbReference>
<dbReference type="Pfam" id="PF23023">
    <property type="entry name" value="Anti-Pycsar_Apyc1"/>
    <property type="match status" value="1"/>
</dbReference>
<dbReference type="SMART" id="SM00849">
    <property type="entry name" value="Lactamase_B"/>
    <property type="match status" value="1"/>
</dbReference>
<dbReference type="SUPFAM" id="SSF56281">
    <property type="entry name" value="Metallo-hydrolase/oxidoreductase"/>
    <property type="match status" value="1"/>
</dbReference>
<gene>
    <name evidence="7" type="ORF">Goe3_c11900</name>
</gene>
<organism>
    <name type="scientific">Bacillus phage vB_BsuM-Goe3</name>
    <dbReference type="NCBI Taxonomy" id="1933063"/>
    <lineage>
        <taxon>Viruses</taxon>
        <taxon>Duplodnaviria</taxon>
        <taxon>Heunggongvirae</taxon>
        <taxon>Uroviricota</taxon>
        <taxon>Caudoviricetes</taxon>
        <taxon>Herelleviridae</taxon>
        <taxon>Bastillevirinae</taxon>
        <taxon>Grisebachstrassevirus</taxon>
        <taxon>Grisebachstrassevirus goe3</taxon>
    </lineage>
</organism>
<evidence type="ECO:0000250" key="1">
    <source>
        <dbReference type="UniProtKB" id="A0A2W1NDJ7"/>
    </source>
</evidence>
<evidence type="ECO:0000250" key="2">
    <source>
        <dbReference type="UniProtKB" id="A0A345MJY6"/>
    </source>
</evidence>
<evidence type="ECO:0000250" key="3">
    <source>
        <dbReference type="UniProtKB" id="P0DTL1"/>
    </source>
</evidence>
<evidence type="ECO:0000269" key="4">
    <source>
    </source>
</evidence>
<evidence type="ECO:0000303" key="5">
    <source>
    </source>
</evidence>
<evidence type="ECO:0000305" key="6"/>
<evidence type="ECO:0000312" key="7">
    <source>
        <dbReference type="EMBL" id="APZ82580.1"/>
    </source>
</evidence>